<sequence length="407" mass="44473">MRQLLPGDTAWRNIRLATMDPQQQTPYGLVDNLALIVREGLICDIVPKTQIPVSGDNIHDMQGRLVTPGLIDCHTHLVFAGSRAGEWEQRLNGVSYQYISAQGGGINATVSATRACAEDTLYLLAHERMMRLINEGVTLLEIKSGYGLELATEEKMLRVAAKLAAENAIDISSTLLAAHATPVEYHGDPDGYIALVCETIIPQLWKKRLFEAVDLFCESVGFSVAHSERVLQTAKALGIPVKGHVEQLSLLGGAQLVSRYQGLSADHIEYLDEAGVAAMRDGGTVGVLLPGAFYFLGETQRPPVELLRRYQVPVAVASDFNPGTSPFCSLHLAMNMACVQFGLTPEEAWAGVTRHAARALGRQATHGQLRAGFRADFVVWDAEQPVEIVYEPGRNPLYQRVYQGQIT</sequence>
<feature type="chain" id="PRO_1000079825" description="Imidazolonepropionase">
    <location>
        <begin position="1"/>
        <end position="407"/>
    </location>
</feature>
<feature type="binding site" evidence="1">
    <location>
        <position position="74"/>
    </location>
    <ligand>
        <name>Fe(3+)</name>
        <dbReference type="ChEBI" id="CHEBI:29034"/>
    </ligand>
</feature>
<feature type="binding site" evidence="1">
    <location>
        <position position="74"/>
    </location>
    <ligand>
        <name>Zn(2+)</name>
        <dbReference type="ChEBI" id="CHEBI:29105"/>
    </ligand>
</feature>
<feature type="binding site" evidence="1">
    <location>
        <position position="76"/>
    </location>
    <ligand>
        <name>Fe(3+)</name>
        <dbReference type="ChEBI" id="CHEBI:29034"/>
    </ligand>
</feature>
<feature type="binding site" evidence="1">
    <location>
        <position position="76"/>
    </location>
    <ligand>
        <name>Zn(2+)</name>
        <dbReference type="ChEBI" id="CHEBI:29105"/>
    </ligand>
</feature>
<feature type="binding site" evidence="1">
    <location>
        <position position="83"/>
    </location>
    <ligand>
        <name>4-imidazolone-5-propanoate</name>
        <dbReference type="ChEBI" id="CHEBI:77893"/>
    </ligand>
</feature>
<feature type="binding site" evidence="1">
    <location>
        <position position="146"/>
    </location>
    <ligand>
        <name>4-imidazolone-5-propanoate</name>
        <dbReference type="ChEBI" id="CHEBI:77893"/>
    </ligand>
</feature>
<feature type="binding site" evidence="1">
    <location>
        <position position="146"/>
    </location>
    <ligand>
        <name>N-formimidoyl-L-glutamate</name>
        <dbReference type="ChEBI" id="CHEBI:58928"/>
    </ligand>
</feature>
<feature type="binding site" evidence="1">
    <location>
        <position position="179"/>
    </location>
    <ligand>
        <name>4-imidazolone-5-propanoate</name>
        <dbReference type="ChEBI" id="CHEBI:77893"/>
    </ligand>
</feature>
<feature type="binding site" evidence="1">
    <location>
        <position position="244"/>
    </location>
    <ligand>
        <name>Fe(3+)</name>
        <dbReference type="ChEBI" id="CHEBI:29034"/>
    </ligand>
</feature>
<feature type="binding site" evidence="1">
    <location>
        <position position="244"/>
    </location>
    <ligand>
        <name>Zn(2+)</name>
        <dbReference type="ChEBI" id="CHEBI:29105"/>
    </ligand>
</feature>
<feature type="binding site" evidence="1">
    <location>
        <position position="247"/>
    </location>
    <ligand>
        <name>4-imidazolone-5-propanoate</name>
        <dbReference type="ChEBI" id="CHEBI:77893"/>
    </ligand>
</feature>
<feature type="binding site" evidence="1">
    <location>
        <position position="319"/>
    </location>
    <ligand>
        <name>Fe(3+)</name>
        <dbReference type="ChEBI" id="CHEBI:29034"/>
    </ligand>
</feature>
<feature type="binding site" evidence="1">
    <location>
        <position position="319"/>
    </location>
    <ligand>
        <name>Zn(2+)</name>
        <dbReference type="ChEBI" id="CHEBI:29105"/>
    </ligand>
</feature>
<feature type="binding site" evidence="1">
    <location>
        <position position="321"/>
    </location>
    <ligand>
        <name>N-formimidoyl-L-glutamate</name>
        <dbReference type="ChEBI" id="CHEBI:58928"/>
    </ligand>
</feature>
<feature type="binding site" evidence="1">
    <location>
        <position position="323"/>
    </location>
    <ligand>
        <name>N-formimidoyl-L-glutamate</name>
        <dbReference type="ChEBI" id="CHEBI:58928"/>
    </ligand>
</feature>
<feature type="binding site" evidence="1">
    <location>
        <position position="324"/>
    </location>
    <ligand>
        <name>4-imidazolone-5-propanoate</name>
        <dbReference type="ChEBI" id="CHEBI:77893"/>
    </ligand>
</feature>
<accession>A9MJF3</accession>
<proteinExistence type="inferred from homology"/>
<keyword id="KW-0963">Cytoplasm</keyword>
<keyword id="KW-0369">Histidine metabolism</keyword>
<keyword id="KW-0378">Hydrolase</keyword>
<keyword id="KW-0408">Iron</keyword>
<keyword id="KW-0479">Metal-binding</keyword>
<keyword id="KW-1185">Reference proteome</keyword>
<keyword id="KW-0862">Zinc</keyword>
<protein>
    <recommendedName>
        <fullName evidence="1">Imidazolonepropionase</fullName>
        <ecNumber evidence="1">3.5.2.7</ecNumber>
    </recommendedName>
    <alternativeName>
        <fullName evidence="1">Imidazolone-5-propionate hydrolase</fullName>
    </alternativeName>
</protein>
<reference key="1">
    <citation type="submission" date="2007-11" db="EMBL/GenBank/DDBJ databases">
        <authorList>
            <consortium name="The Salmonella enterica serovar Arizonae Genome Sequencing Project"/>
            <person name="McClelland M."/>
            <person name="Sanderson E.K."/>
            <person name="Porwollik S."/>
            <person name="Spieth J."/>
            <person name="Clifton W.S."/>
            <person name="Fulton R."/>
            <person name="Chunyan W."/>
            <person name="Wollam A."/>
            <person name="Shah N."/>
            <person name="Pepin K."/>
            <person name="Bhonagiri V."/>
            <person name="Nash W."/>
            <person name="Johnson M."/>
            <person name="Thiruvilangam P."/>
            <person name="Wilson R."/>
        </authorList>
    </citation>
    <scope>NUCLEOTIDE SEQUENCE [LARGE SCALE GENOMIC DNA]</scope>
    <source>
        <strain>ATCC BAA-731 / CDC346-86 / RSK2980</strain>
    </source>
</reference>
<name>HUTI_SALAR</name>
<gene>
    <name evidence="1" type="primary">hutI</name>
    <name type="ordered locus">SARI_02139</name>
</gene>
<dbReference type="EC" id="3.5.2.7" evidence="1"/>
<dbReference type="EMBL" id="CP000880">
    <property type="protein sequence ID" value="ABX22016.1"/>
    <property type="molecule type" value="Genomic_DNA"/>
</dbReference>
<dbReference type="SMR" id="A9MJF3"/>
<dbReference type="STRING" id="41514.SARI_02139"/>
<dbReference type="KEGG" id="ses:SARI_02139"/>
<dbReference type="HOGENOM" id="CLU_041647_0_0_6"/>
<dbReference type="UniPathway" id="UPA00379">
    <property type="reaction ID" value="UER00551"/>
</dbReference>
<dbReference type="Proteomes" id="UP000002084">
    <property type="component" value="Chromosome"/>
</dbReference>
<dbReference type="GO" id="GO:0005737">
    <property type="term" value="C:cytoplasm"/>
    <property type="evidence" value="ECO:0007669"/>
    <property type="project" value="UniProtKB-SubCell"/>
</dbReference>
<dbReference type="GO" id="GO:0050480">
    <property type="term" value="F:imidazolonepropionase activity"/>
    <property type="evidence" value="ECO:0007669"/>
    <property type="project" value="UniProtKB-UniRule"/>
</dbReference>
<dbReference type="GO" id="GO:0005506">
    <property type="term" value="F:iron ion binding"/>
    <property type="evidence" value="ECO:0007669"/>
    <property type="project" value="UniProtKB-UniRule"/>
</dbReference>
<dbReference type="GO" id="GO:0008270">
    <property type="term" value="F:zinc ion binding"/>
    <property type="evidence" value="ECO:0007669"/>
    <property type="project" value="UniProtKB-UniRule"/>
</dbReference>
<dbReference type="GO" id="GO:0019556">
    <property type="term" value="P:L-histidine catabolic process to glutamate and formamide"/>
    <property type="evidence" value="ECO:0007669"/>
    <property type="project" value="UniProtKB-UniPathway"/>
</dbReference>
<dbReference type="GO" id="GO:0019557">
    <property type="term" value="P:L-histidine catabolic process to glutamate and formate"/>
    <property type="evidence" value="ECO:0007669"/>
    <property type="project" value="UniProtKB-UniPathway"/>
</dbReference>
<dbReference type="FunFam" id="3.20.20.140:FF:000007">
    <property type="entry name" value="Imidazolonepropionase"/>
    <property type="match status" value="1"/>
</dbReference>
<dbReference type="Gene3D" id="3.20.20.140">
    <property type="entry name" value="Metal-dependent hydrolases"/>
    <property type="match status" value="1"/>
</dbReference>
<dbReference type="Gene3D" id="2.30.40.10">
    <property type="entry name" value="Urease, subunit C, domain 1"/>
    <property type="match status" value="1"/>
</dbReference>
<dbReference type="HAMAP" id="MF_00372">
    <property type="entry name" value="HutI"/>
    <property type="match status" value="1"/>
</dbReference>
<dbReference type="InterPro" id="IPR006680">
    <property type="entry name" value="Amidohydro-rel"/>
</dbReference>
<dbReference type="InterPro" id="IPR005920">
    <property type="entry name" value="HutI"/>
</dbReference>
<dbReference type="InterPro" id="IPR011059">
    <property type="entry name" value="Metal-dep_hydrolase_composite"/>
</dbReference>
<dbReference type="InterPro" id="IPR032466">
    <property type="entry name" value="Metal_Hydrolase"/>
</dbReference>
<dbReference type="NCBIfam" id="TIGR01224">
    <property type="entry name" value="hutI"/>
    <property type="match status" value="1"/>
</dbReference>
<dbReference type="PANTHER" id="PTHR42752">
    <property type="entry name" value="IMIDAZOLONEPROPIONASE"/>
    <property type="match status" value="1"/>
</dbReference>
<dbReference type="PANTHER" id="PTHR42752:SF1">
    <property type="entry name" value="IMIDAZOLONEPROPIONASE-RELATED"/>
    <property type="match status" value="1"/>
</dbReference>
<dbReference type="Pfam" id="PF01979">
    <property type="entry name" value="Amidohydro_1"/>
    <property type="match status" value="1"/>
</dbReference>
<dbReference type="SUPFAM" id="SSF51338">
    <property type="entry name" value="Composite domain of metallo-dependent hydrolases"/>
    <property type="match status" value="1"/>
</dbReference>
<dbReference type="SUPFAM" id="SSF51556">
    <property type="entry name" value="Metallo-dependent hydrolases"/>
    <property type="match status" value="1"/>
</dbReference>
<evidence type="ECO:0000255" key="1">
    <source>
        <dbReference type="HAMAP-Rule" id="MF_00372"/>
    </source>
</evidence>
<comment type="function">
    <text evidence="1">Catalyzes the hydrolytic cleavage of the carbon-nitrogen bond in imidazolone-5-propanoate to yield N-formimidoyl-L-glutamate. It is the third step in the universal histidine degradation pathway.</text>
</comment>
<comment type="catalytic activity">
    <reaction evidence="1">
        <text>4-imidazolone-5-propanoate + H2O = N-formimidoyl-L-glutamate</text>
        <dbReference type="Rhea" id="RHEA:23660"/>
        <dbReference type="ChEBI" id="CHEBI:15377"/>
        <dbReference type="ChEBI" id="CHEBI:58928"/>
        <dbReference type="ChEBI" id="CHEBI:77893"/>
        <dbReference type="EC" id="3.5.2.7"/>
    </reaction>
</comment>
<comment type="cofactor">
    <cofactor evidence="1">
        <name>Zn(2+)</name>
        <dbReference type="ChEBI" id="CHEBI:29105"/>
    </cofactor>
    <cofactor evidence="1">
        <name>Fe(3+)</name>
        <dbReference type="ChEBI" id="CHEBI:29034"/>
    </cofactor>
    <text evidence="1">Binds 1 zinc or iron ion per subunit.</text>
</comment>
<comment type="pathway">
    <text evidence="1">Amino-acid degradation; L-histidine degradation into L-glutamate; N-formimidoyl-L-glutamate from L-histidine: step 3/3.</text>
</comment>
<comment type="subcellular location">
    <subcellularLocation>
        <location evidence="1">Cytoplasm</location>
    </subcellularLocation>
</comment>
<comment type="similarity">
    <text evidence="1">Belongs to the metallo-dependent hydrolases superfamily. HutI family.</text>
</comment>
<organism>
    <name type="scientific">Salmonella arizonae (strain ATCC BAA-731 / CDC346-86 / RSK2980)</name>
    <dbReference type="NCBI Taxonomy" id="41514"/>
    <lineage>
        <taxon>Bacteria</taxon>
        <taxon>Pseudomonadati</taxon>
        <taxon>Pseudomonadota</taxon>
        <taxon>Gammaproteobacteria</taxon>
        <taxon>Enterobacterales</taxon>
        <taxon>Enterobacteriaceae</taxon>
        <taxon>Salmonella</taxon>
    </lineage>
</organism>